<keyword id="KW-0067">ATP-binding</keyword>
<keyword id="KW-0347">Helicase</keyword>
<keyword id="KW-0378">Hydrolase</keyword>
<keyword id="KW-0547">Nucleotide-binding</keyword>
<keyword id="KW-0539">Nucleus</keyword>
<keyword id="KW-1185">Reference proteome</keyword>
<keyword id="KW-0690">Ribosome biogenesis</keyword>
<keyword id="KW-0694">RNA-binding</keyword>
<keyword id="KW-0698">rRNA processing</keyword>
<feature type="chain" id="PRO_0000227942" description="ATP-dependent RNA helicase FAL1">
    <location>
        <begin position="1"/>
        <end position="398"/>
    </location>
</feature>
<feature type="domain" description="Helicase ATP-binding" evidence="2">
    <location>
        <begin position="54"/>
        <end position="226"/>
    </location>
</feature>
<feature type="domain" description="Helicase C-terminal" evidence="3">
    <location>
        <begin position="237"/>
        <end position="398"/>
    </location>
</feature>
<feature type="short sequence motif" description="Q motif">
    <location>
        <begin position="23"/>
        <end position="51"/>
    </location>
</feature>
<feature type="short sequence motif" description="DEAD box">
    <location>
        <begin position="172"/>
        <end position="175"/>
    </location>
</feature>
<feature type="binding site" evidence="2">
    <location>
        <begin position="67"/>
        <end position="74"/>
    </location>
    <ligand>
        <name>ATP</name>
        <dbReference type="ChEBI" id="CHEBI:30616"/>
    </ligand>
</feature>
<sequence>MSFDRNQDGKLKVKTSSKLPVSPTFESMKLQENLLRGIYGYGFEAPSAIQSRAITQIIRGKDVIAQAQSGTGKTATFTIGMLQVIDSSSKDLQALVLSPTRELAAQISQVVRNLGDYMNVVALACTGGKALQQDISKVNKGCHVMSGTPGRVLDMIKRRIINTRHVKMLVLDEADELLSETLGFKQQLYDIFTKLPSSVQVVVVSATMSKDVLEVTKKFMSDPVKILVKRDEVSLEGIKQYHINVDKEEWKFDTLCDLYDSLTITQCVIFCNTKKKVDWLSHKLIQNNFAVASIHGDMKQDDRDKVMSDFRSGSSRVLISTDVWARGIDVQQVSLVINYDLPELLENYIHRIGRSGRFGRKGVAINFITREEVTKLKSIEKHYSIKIKPMPADIDSLS</sequence>
<reference key="1">
    <citation type="journal article" date="2004" name="Science">
        <title>The Ashbya gossypii genome as a tool for mapping the ancient Saccharomyces cerevisiae genome.</title>
        <authorList>
            <person name="Dietrich F.S."/>
            <person name="Voegeli S."/>
            <person name="Brachat S."/>
            <person name="Lerch A."/>
            <person name="Gates K."/>
            <person name="Steiner S."/>
            <person name="Mohr C."/>
            <person name="Poehlmann R."/>
            <person name="Luedi P."/>
            <person name="Choi S."/>
            <person name="Wing R.A."/>
            <person name="Flavier A."/>
            <person name="Gaffney T.D."/>
            <person name="Philippsen P."/>
        </authorList>
    </citation>
    <scope>NUCLEOTIDE SEQUENCE [LARGE SCALE GENOMIC DNA]</scope>
    <source>
        <strain>ATCC 10895 / CBS 109.51 / FGSC 9923 / NRRL Y-1056</strain>
    </source>
</reference>
<reference key="2">
    <citation type="journal article" date="2013" name="G3 (Bethesda)">
        <title>Genomes of Ashbya fungi isolated from insects reveal four mating-type loci, numerous translocations, lack of transposons, and distinct gene duplications.</title>
        <authorList>
            <person name="Dietrich F.S."/>
            <person name="Voegeli S."/>
            <person name="Kuo S."/>
            <person name="Philippsen P."/>
        </authorList>
    </citation>
    <scope>GENOME REANNOTATION</scope>
    <scope>SEQUENCE REVISION TO 211</scope>
    <source>
        <strain>ATCC 10895 / CBS 109.51 / FGSC 9923 / NRRL Y-1056</strain>
    </source>
</reference>
<proteinExistence type="inferred from homology"/>
<protein>
    <recommendedName>
        <fullName>ATP-dependent RNA helicase FAL1</fullName>
        <ecNumber>3.6.4.13</ecNumber>
    </recommendedName>
</protein>
<gene>
    <name type="primary">FAL1</name>
    <name type="ordered locus">AER408W</name>
</gene>
<comment type="function">
    <text evidence="1">ATP-dependent RNA helicase involved in 40S ribosomal subunit biogenesis. Required for the processing and cleavage of 35S pre-rRNA at sites A0, A1, and A2, leading to mature 18S rRNA (By similarity).</text>
</comment>
<comment type="catalytic activity">
    <reaction>
        <text>ATP + H2O = ADP + phosphate + H(+)</text>
        <dbReference type="Rhea" id="RHEA:13065"/>
        <dbReference type="ChEBI" id="CHEBI:15377"/>
        <dbReference type="ChEBI" id="CHEBI:15378"/>
        <dbReference type="ChEBI" id="CHEBI:30616"/>
        <dbReference type="ChEBI" id="CHEBI:43474"/>
        <dbReference type="ChEBI" id="CHEBI:456216"/>
        <dbReference type="EC" id="3.6.4.13"/>
    </reaction>
</comment>
<comment type="subcellular location">
    <subcellularLocation>
        <location evidence="1">Nucleus</location>
        <location evidence="1">Nucleolus</location>
    </subcellularLocation>
</comment>
<comment type="domain">
    <text>The Q motif is unique to and characteristic of the DEAD box family of RNA helicases and controls ATP binding and hydrolysis.</text>
</comment>
<comment type="similarity">
    <text evidence="4">Belongs to the DEAD box helicase family. DDX48/FAL1 subfamily.</text>
</comment>
<evidence type="ECO:0000250" key="1"/>
<evidence type="ECO:0000255" key="2">
    <source>
        <dbReference type="PROSITE-ProRule" id="PRU00541"/>
    </source>
</evidence>
<evidence type="ECO:0000255" key="3">
    <source>
        <dbReference type="PROSITE-ProRule" id="PRU00542"/>
    </source>
</evidence>
<evidence type="ECO:0000305" key="4"/>
<name>FAL1_EREGS</name>
<organism>
    <name type="scientific">Eremothecium gossypii (strain ATCC 10895 / CBS 109.51 / FGSC 9923 / NRRL Y-1056)</name>
    <name type="common">Yeast</name>
    <name type="synonym">Ashbya gossypii</name>
    <dbReference type="NCBI Taxonomy" id="284811"/>
    <lineage>
        <taxon>Eukaryota</taxon>
        <taxon>Fungi</taxon>
        <taxon>Dikarya</taxon>
        <taxon>Ascomycota</taxon>
        <taxon>Saccharomycotina</taxon>
        <taxon>Saccharomycetes</taxon>
        <taxon>Saccharomycetales</taxon>
        <taxon>Saccharomycetaceae</taxon>
        <taxon>Eremothecium</taxon>
    </lineage>
</organism>
<accession>Q755W0</accession>
<dbReference type="EC" id="3.6.4.13"/>
<dbReference type="EMBL" id="AE016818">
    <property type="protein sequence ID" value="AAS53087.2"/>
    <property type="molecule type" value="Genomic_DNA"/>
</dbReference>
<dbReference type="RefSeq" id="NP_985263.2">
    <property type="nucleotide sequence ID" value="NM_210617.2"/>
</dbReference>
<dbReference type="SMR" id="Q755W0"/>
<dbReference type="FunCoup" id="Q755W0">
    <property type="interactions" value="716"/>
</dbReference>
<dbReference type="STRING" id="284811.Q755W0"/>
<dbReference type="EnsemblFungi" id="AAS53087">
    <property type="protein sequence ID" value="AAS53087"/>
    <property type="gene ID" value="AGOS_AER408W"/>
</dbReference>
<dbReference type="GeneID" id="4621479"/>
<dbReference type="KEGG" id="ago:AGOS_AER408W"/>
<dbReference type="eggNOG" id="KOG0328">
    <property type="taxonomic scope" value="Eukaryota"/>
</dbReference>
<dbReference type="HOGENOM" id="CLU_003041_1_0_1"/>
<dbReference type="InParanoid" id="Q755W0"/>
<dbReference type="OMA" id="DTIHGDK"/>
<dbReference type="OrthoDB" id="10265785at2759"/>
<dbReference type="Proteomes" id="UP000000591">
    <property type="component" value="Chromosome V"/>
</dbReference>
<dbReference type="GO" id="GO:0071013">
    <property type="term" value="C:catalytic step 2 spliceosome"/>
    <property type="evidence" value="ECO:0000318"/>
    <property type="project" value="GO_Central"/>
</dbReference>
<dbReference type="GO" id="GO:0097078">
    <property type="term" value="C:FAL1-SGD1 complex"/>
    <property type="evidence" value="ECO:0007669"/>
    <property type="project" value="EnsemblFungi"/>
</dbReference>
<dbReference type="GO" id="GO:0005730">
    <property type="term" value="C:nucleolus"/>
    <property type="evidence" value="ECO:0000318"/>
    <property type="project" value="GO_Central"/>
</dbReference>
<dbReference type="GO" id="GO:0030688">
    <property type="term" value="C:preribosome, small subunit precursor"/>
    <property type="evidence" value="ECO:0007669"/>
    <property type="project" value="EnsemblFungi"/>
</dbReference>
<dbReference type="GO" id="GO:0032040">
    <property type="term" value="C:small-subunit processome"/>
    <property type="evidence" value="ECO:0007669"/>
    <property type="project" value="EnsemblFungi"/>
</dbReference>
<dbReference type="GO" id="GO:0005524">
    <property type="term" value="F:ATP binding"/>
    <property type="evidence" value="ECO:0007669"/>
    <property type="project" value="UniProtKB-KW"/>
</dbReference>
<dbReference type="GO" id="GO:0016887">
    <property type="term" value="F:ATP hydrolysis activity"/>
    <property type="evidence" value="ECO:0007669"/>
    <property type="project" value="RHEA"/>
</dbReference>
<dbReference type="GO" id="GO:0003729">
    <property type="term" value="F:mRNA binding"/>
    <property type="evidence" value="ECO:0000318"/>
    <property type="project" value="GO_Central"/>
</dbReference>
<dbReference type="GO" id="GO:0003724">
    <property type="term" value="F:RNA helicase activity"/>
    <property type="evidence" value="ECO:0000318"/>
    <property type="project" value="GO_Central"/>
</dbReference>
<dbReference type="GO" id="GO:0000462">
    <property type="term" value="P:maturation of SSU-rRNA from tricistronic rRNA transcript (SSU-rRNA, 5.8S rRNA, LSU-rRNA)"/>
    <property type="evidence" value="ECO:0007669"/>
    <property type="project" value="EnsemblFungi"/>
</dbReference>
<dbReference type="GO" id="GO:0000398">
    <property type="term" value="P:mRNA splicing, via spliceosome"/>
    <property type="evidence" value="ECO:0000318"/>
    <property type="project" value="GO_Central"/>
</dbReference>
<dbReference type="CDD" id="cd18787">
    <property type="entry name" value="SF2_C_DEAD"/>
    <property type="match status" value="1"/>
</dbReference>
<dbReference type="FunFam" id="3.40.50.300:FF:000849">
    <property type="entry name" value="ATP-dependent RNA helicase DBP5"/>
    <property type="match status" value="1"/>
</dbReference>
<dbReference type="FunFam" id="3.40.50.300:FF:000031">
    <property type="entry name" value="Eukaryotic initiation factor 4A-III"/>
    <property type="match status" value="1"/>
</dbReference>
<dbReference type="Gene3D" id="3.40.50.300">
    <property type="entry name" value="P-loop containing nucleotide triphosphate hydrolases"/>
    <property type="match status" value="2"/>
</dbReference>
<dbReference type="InterPro" id="IPR011545">
    <property type="entry name" value="DEAD/DEAH_box_helicase_dom"/>
</dbReference>
<dbReference type="InterPro" id="IPR014001">
    <property type="entry name" value="Helicase_ATP-bd"/>
</dbReference>
<dbReference type="InterPro" id="IPR001650">
    <property type="entry name" value="Helicase_C-like"/>
</dbReference>
<dbReference type="InterPro" id="IPR027417">
    <property type="entry name" value="P-loop_NTPase"/>
</dbReference>
<dbReference type="InterPro" id="IPR000629">
    <property type="entry name" value="RNA-helicase_DEAD-box_CS"/>
</dbReference>
<dbReference type="InterPro" id="IPR014014">
    <property type="entry name" value="RNA_helicase_DEAD_Q_motif"/>
</dbReference>
<dbReference type="PANTHER" id="PTHR47958">
    <property type="entry name" value="ATP-DEPENDENT RNA HELICASE DBP3"/>
    <property type="match status" value="1"/>
</dbReference>
<dbReference type="Pfam" id="PF00270">
    <property type="entry name" value="DEAD"/>
    <property type="match status" value="1"/>
</dbReference>
<dbReference type="Pfam" id="PF00271">
    <property type="entry name" value="Helicase_C"/>
    <property type="match status" value="1"/>
</dbReference>
<dbReference type="SMART" id="SM00487">
    <property type="entry name" value="DEXDc"/>
    <property type="match status" value="1"/>
</dbReference>
<dbReference type="SMART" id="SM00490">
    <property type="entry name" value="HELICc"/>
    <property type="match status" value="1"/>
</dbReference>
<dbReference type="SUPFAM" id="SSF52540">
    <property type="entry name" value="P-loop containing nucleoside triphosphate hydrolases"/>
    <property type="match status" value="1"/>
</dbReference>
<dbReference type="PROSITE" id="PS00039">
    <property type="entry name" value="DEAD_ATP_HELICASE"/>
    <property type="match status" value="1"/>
</dbReference>
<dbReference type="PROSITE" id="PS51192">
    <property type="entry name" value="HELICASE_ATP_BIND_1"/>
    <property type="match status" value="1"/>
</dbReference>
<dbReference type="PROSITE" id="PS51194">
    <property type="entry name" value="HELICASE_CTER"/>
    <property type="match status" value="1"/>
</dbReference>
<dbReference type="PROSITE" id="PS51195">
    <property type="entry name" value="Q_MOTIF"/>
    <property type="match status" value="1"/>
</dbReference>